<gene>
    <name type="primary">cspD</name>
    <name type="ordered locus">HI_1434.1</name>
</gene>
<sequence length="72" mass="7958">MEIGIVKWFNNAKGFGFISAEGVDADIFAHYSVIEMDGYRSLKAGQKVQFEVLHSDKGSHATKIIPIADTQE</sequence>
<reference key="1">
    <citation type="journal article" date="1995" name="Science">
        <title>Whole-genome random sequencing and assembly of Haemophilus influenzae Rd.</title>
        <authorList>
            <person name="Fleischmann R.D."/>
            <person name="Adams M.D."/>
            <person name="White O."/>
            <person name="Clayton R.A."/>
            <person name="Kirkness E.F."/>
            <person name="Kerlavage A.R."/>
            <person name="Bult C.J."/>
            <person name="Tomb J.-F."/>
            <person name="Dougherty B.A."/>
            <person name="Merrick J.M."/>
            <person name="McKenney K."/>
            <person name="Sutton G.G."/>
            <person name="FitzHugh W."/>
            <person name="Fields C.A."/>
            <person name="Gocayne J.D."/>
            <person name="Scott J.D."/>
            <person name="Shirley R."/>
            <person name="Liu L.-I."/>
            <person name="Glodek A."/>
            <person name="Kelley J.M."/>
            <person name="Weidman J.F."/>
            <person name="Phillips C.A."/>
            <person name="Spriggs T."/>
            <person name="Hedblom E."/>
            <person name="Cotton M.D."/>
            <person name="Utterback T.R."/>
            <person name="Hanna M.C."/>
            <person name="Nguyen D.T."/>
            <person name="Saudek D.M."/>
            <person name="Brandon R.C."/>
            <person name="Fine L.D."/>
            <person name="Fritchman J.L."/>
            <person name="Fuhrmann J.L."/>
            <person name="Geoghagen N.S.M."/>
            <person name="Gnehm C.L."/>
            <person name="McDonald L.A."/>
            <person name="Small K.V."/>
            <person name="Fraser C.M."/>
            <person name="Smith H.O."/>
            <person name="Venter J.C."/>
        </authorList>
    </citation>
    <scope>NUCLEOTIDE SEQUENCE [LARGE SCALE GENOMIC DNA]</scope>
    <source>
        <strain>ATCC 51907 / DSM 11121 / KW20 / Rd</strain>
    </source>
</reference>
<reference key="2">
    <citation type="submission" date="1995-09" db="UniProtKB">
        <authorList>
            <person name="Koonin E.V."/>
            <person name="Rudd K.E."/>
        </authorList>
    </citation>
    <scope>IDENTIFICATION</scope>
</reference>
<organism>
    <name type="scientific">Haemophilus influenzae (strain ATCC 51907 / DSM 11121 / KW20 / Rd)</name>
    <dbReference type="NCBI Taxonomy" id="71421"/>
    <lineage>
        <taxon>Bacteria</taxon>
        <taxon>Pseudomonadati</taxon>
        <taxon>Pseudomonadota</taxon>
        <taxon>Gammaproteobacteria</taxon>
        <taxon>Pasteurellales</taxon>
        <taxon>Pasteurellaceae</taxon>
        <taxon>Haemophilus</taxon>
    </lineage>
</organism>
<accession>P46449</accession>
<protein>
    <recommendedName>
        <fullName>Cold shock-like protein CspD</fullName>
    </recommendedName>
</protein>
<feature type="chain" id="PRO_0000100252" description="Cold shock-like protein CspD">
    <location>
        <begin position="1"/>
        <end position="72"/>
    </location>
</feature>
<feature type="domain" description="CSD">
    <location>
        <begin position="4"/>
        <end position="64"/>
    </location>
</feature>
<name>CSPD_HAEIN</name>
<proteinExistence type="inferred from homology"/>
<comment type="subcellular location">
    <subcellularLocation>
        <location evidence="1">Cytoplasm</location>
    </subcellularLocation>
</comment>
<dbReference type="EMBL" id="L42023">
    <property type="protein sequence ID" value="AAC23082.1"/>
    <property type="molecule type" value="Genomic_DNA"/>
</dbReference>
<dbReference type="RefSeq" id="NP_439584.1">
    <property type="nucleotide sequence ID" value="NC_000907.1"/>
</dbReference>
<dbReference type="SMR" id="P46449"/>
<dbReference type="STRING" id="71421.HI_1434.1"/>
<dbReference type="EnsemblBacteria" id="AAC23082">
    <property type="protein sequence ID" value="AAC23082"/>
    <property type="gene ID" value="HI_1434.1"/>
</dbReference>
<dbReference type="KEGG" id="hin:HI_1434.1"/>
<dbReference type="PATRIC" id="fig|71421.8.peg.1492"/>
<dbReference type="eggNOG" id="COG1278">
    <property type="taxonomic scope" value="Bacteria"/>
</dbReference>
<dbReference type="HOGENOM" id="CLU_117621_0_3_6"/>
<dbReference type="OrthoDB" id="9810590at2"/>
<dbReference type="PhylomeDB" id="P46449"/>
<dbReference type="BioCyc" id="HINF71421:G1GJ1-1458-MONOMER"/>
<dbReference type="Proteomes" id="UP000000579">
    <property type="component" value="Chromosome"/>
</dbReference>
<dbReference type="GO" id="GO:0005829">
    <property type="term" value="C:cytosol"/>
    <property type="evidence" value="ECO:0007669"/>
    <property type="project" value="UniProtKB-ARBA"/>
</dbReference>
<dbReference type="GO" id="GO:0003677">
    <property type="term" value="F:DNA binding"/>
    <property type="evidence" value="ECO:0007669"/>
    <property type="project" value="UniProtKB-KW"/>
</dbReference>
<dbReference type="GO" id="GO:0003676">
    <property type="term" value="F:nucleic acid binding"/>
    <property type="evidence" value="ECO:0000318"/>
    <property type="project" value="GO_Central"/>
</dbReference>
<dbReference type="GO" id="GO:0006355">
    <property type="term" value="P:regulation of DNA-templated transcription"/>
    <property type="evidence" value="ECO:0007669"/>
    <property type="project" value="InterPro"/>
</dbReference>
<dbReference type="GO" id="GO:0010468">
    <property type="term" value="P:regulation of gene expression"/>
    <property type="evidence" value="ECO:0000318"/>
    <property type="project" value="GO_Central"/>
</dbReference>
<dbReference type="CDD" id="cd04458">
    <property type="entry name" value="CSP_CDS"/>
    <property type="match status" value="1"/>
</dbReference>
<dbReference type="FunFam" id="2.40.50.140:FF:000006">
    <property type="entry name" value="Cold shock protein CspC"/>
    <property type="match status" value="1"/>
</dbReference>
<dbReference type="Gene3D" id="2.40.50.140">
    <property type="entry name" value="Nucleic acid-binding proteins"/>
    <property type="match status" value="1"/>
</dbReference>
<dbReference type="InterPro" id="IPR012156">
    <property type="entry name" value="Cold_shock_CspA"/>
</dbReference>
<dbReference type="InterPro" id="IPR011129">
    <property type="entry name" value="CSD"/>
</dbReference>
<dbReference type="InterPro" id="IPR019844">
    <property type="entry name" value="CSD_CS"/>
</dbReference>
<dbReference type="InterPro" id="IPR002059">
    <property type="entry name" value="CSP_DNA-bd"/>
</dbReference>
<dbReference type="InterPro" id="IPR012751">
    <property type="entry name" value="CspD"/>
</dbReference>
<dbReference type="InterPro" id="IPR051373">
    <property type="entry name" value="Lin-28_RNA-binding"/>
</dbReference>
<dbReference type="InterPro" id="IPR012340">
    <property type="entry name" value="NA-bd_OB-fold"/>
</dbReference>
<dbReference type="NCBIfam" id="TIGR02381">
    <property type="entry name" value="cspD"/>
    <property type="match status" value="1"/>
</dbReference>
<dbReference type="PANTHER" id="PTHR46109">
    <property type="entry name" value="PROTEIN LIN-28"/>
    <property type="match status" value="1"/>
</dbReference>
<dbReference type="PANTHER" id="PTHR46109:SF1">
    <property type="entry name" value="PROTEIN LIN-28 HOMOLOG"/>
    <property type="match status" value="1"/>
</dbReference>
<dbReference type="Pfam" id="PF00313">
    <property type="entry name" value="CSD"/>
    <property type="match status" value="1"/>
</dbReference>
<dbReference type="PIRSF" id="PIRSF002599">
    <property type="entry name" value="Cold_shock_A"/>
    <property type="match status" value="1"/>
</dbReference>
<dbReference type="PRINTS" id="PR00050">
    <property type="entry name" value="COLDSHOCK"/>
</dbReference>
<dbReference type="SMART" id="SM00357">
    <property type="entry name" value="CSP"/>
    <property type="match status" value="1"/>
</dbReference>
<dbReference type="SUPFAM" id="SSF50249">
    <property type="entry name" value="Nucleic acid-binding proteins"/>
    <property type="match status" value="1"/>
</dbReference>
<dbReference type="PROSITE" id="PS00352">
    <property type="entry name" value="CSD_1"/>
    <property type="match status" value="1"/>
</dbReference>
<dbReference type="PROSITE" id="PS51857">
    <property type="entry name" value="CSD_2"/>
    <property type="match status" value="1"/>
</dbReference>
<keyword id="KW-0963">Cytoplasm</keyword>
<keyword id="KW-0238">DNA-binding</keyword>
<keyword id="KW-1185">Reference proteome</keyword>
<evidence type="ECO:0000250" key="1"/>